<keyword id="KW-0145">Chemotaxis</keyword>
<keyword id="KW-0202">Cytokine</keyword>
<keyword id="KW-0903">Direct protein sequencing</keyword>
<keyword id="KW-1015">Disulfide bond</keyword>
<keyword id="KW-0325">Glycoprotein</keyword>
<keyword id="KW-0472">Membrane</keyword>
<keyword id="KW-1185">Reference proteome</keyword>
<keyword id="KW-0732">Signal</keyword>
<keyword id="KW-0812">Transmembrane</keyword>
<keyword id="KW-1133">Transmembrane helix</keyword>
<name>CXL16_MOUSE</name>
<evidence type="ECO:0000250" key="1"/>
<evidence type="ECO:0000255" key="2"/>
<evidence type="ECO:0000256" key="3">
    <source>
        <dbReference type="SAM" id="MobiDB-lite"/>
    </source>
</evidence>
<evidence type="ECO:0000269" key="4">
    <source>
    </source>
</evidence>
<evidence type="ECO:0000269" key="5">
    <source>
    </source>
</evidence>
<evidence type="ECO:0000269" key="6">
    <source>
    </source>
</evidence>
<evidence type="ECO:0000305" key="7"/>
<dbReference type="EMBL" id="AF277001">
    <property type="protein sequence ID" value="AAG31754.1"/>
    <property type="molecule type" value="mRNA"/>
</dbReference>
<dbReference type="EMBL" id="AF301017">
    <property type="protein sequence ID" value="AAG34366.1"/>
    <property type="molecule type" value="mRNA"/>
</dbReference>
<dbReference type="EMBL" id="AK009599">
    <property type="protein sequence ID" value="BAB26384.1"/>
    <property type="molecule type" value="mRNA"/>
</dbReference>
<dbReference type="EMBL" id="AK028875">
    <property type="protein sequence ID" value="BAC26166.1"/>
    <property type="molecule type" value="mRNA"/>
</dbReference>
<dbReference type="EMBL" id="AK030515">
    <property type="protein sequence ID" value="BAC27000.1"/>
    <property type="molecule type" value="mRNA"/>
</dbReference>
<dbReference type="EMBL" id="AK150224">
    <property type="protein sequence ID" value="BAE29391.1"/>
    <property type="molecule type" value="mRNA"/>
</dbReference>
<dbReference type="EMBL" id="AK151330">
    <property type="protein sequence ID" value="BAE30309.1"/>
    <property type="molecule type" value="mRNA"/>
</dbReference>
<dbReference type="EMBL" id="AK152102">
    <property type="protein sequence ID" value="BAE30949.1"/>
    <property type="molecule type" value="mRNA"/>
</dbReference>
<dbReference type="EMBL" id="AK152547">
    <property type="protein sequence ID" value="BAE31302.1"/>
    <property type="molecule type" value="mRNA"/>
</dbReference>
<dbReference type="EMBL" id="AK153192">
    <property type="protein sequence ID" value="BAE31792.1"/>
    <property type="molecule type" value="mRNA"/>
</dbReference>
<dbReference type="EMBL" id="AL596096">
    <property type="status" value="NOT_ANNOTATED_CDS"/>
    <property type="molecule type" value="Genomic_DNA"/>
</dbReference>
<dbReference type="EMBL" id="CH466596">
    <property type="protein sequence ID" value="EDL12565.1"/>
    <property type="molecule type" value="Genomic_DNA"/>
</dbReference>
<dbReference type="EMBL" id="CH466596">
    <property type="protein sequence ID" value="EDL12566.1"/>
    <property type="molecule type" value="Genomic_DNA"/>
</dbReference>
<dbReference type="EMBL" id="BC019961">
    <property type="protein sequence ID" value="AAH19961.1"/>
    <property type="molecule type" value="mRNA"/>
</dbReference>
<dbReference type="CCDS" id="CCDS24948.1"/>
<dbReference type="RefSeq" id="NP_075647.3">
    <property type="nucleotide sequence ID" value="NM_023158.7"/>
</dbReference>
<dbReference type="FunCoup" id="Q8BSU2">
    <property type="interactions" value="435"/>
</dbReference>
<dbReference type="STRING" id="10090.ENSMUSP00000019064"/>
<dbReference type="GlyGen" id="Q8BSU2">
    <property type="glycosylation" value="2 sites"/>
</dbReference>
<dbReference type="PhosphoSitePlus" id="Q8BSU2"/>
<dbReference type="SwissPalm" id="Q8BSU2"/>
<dbReference type="PaxDb" id="10090-ENSMUSP00000019064"/>
<dbReference type="ProteomicsDB" id="279227"/>
<dbReference type="Antibodypedia" id="11299">
    <property type="antibodies" value="482 antibodies from 35 providers"/>
</dbReference>
<dbReference type="DNASU" id="66102"/>
<dbReference type="Ensembl" id="ENSMUST00000019064.9">
    <property type="protein sequence ID" value="ENSMUSP00000019064.3"/>
    <property type="gene ID" value="ENSMUSG00000018920.12"/>
</dbReference>
<dbReference type="GeneID" id="66102"/>
<dbReference type="KEGG" id="mmu:66102"/>
<dbReference type="UCSC" id="uc007juw.1">
    <property type="organism name" value="mouse"/>
</dbReference>
<dbReference type="AGR" id="MGI:1932682"/>
<dbReference type="CTD" id="58191"/>
<dbReference type="MGI" id="MGI:1932682">
    <property type="gene designation" value="Cxcl16"/>
</dbReference>
<dbReference type="VEuPathDB" id="HostDB:ENSMUSG00000018920"/>
<dbReference type="eggNOG" id="ENOG502T0B7">
    <property type="taxonomic scope" value="Eukaryota"/>
</dbReference>
<dbReference type="GeneTree" id="ENSGT00390000002148"/>
<dbReference type="InParanoid" id="Q8BSU2"/>
<dbReference type="OMA" id="RCNSYIR"/>
<dbReference type="OrthoDB" id="9836360at2759"/>
<dbReference type="PhylomeDB" id="Q8BSU2"/>
<dbReference type="TreeFam" id="TF337941"/>
<dbReference type="Reactome" id="R-MMU-380108">
    <property type="pathway name" value="Chemokine receptors bind chemokines"/>
</dbReference>
<dbReference type="Reactome" id="R-MMU-418594">
    <property type="pathway name" value="G alpha (i) signalling events"/>
</dbReference>
<dbReference type="BioGRID-ORCS" id="66102">
    <property type="hits" value="4 hits in 78 CRISPR screens"/>
</dbReference>
<dbReference type="ChiTaRS" id="Cxcl16">
    <property type="organism name" value="mouse"/>
</dbReference>
<dbReference type="PRO" id="PR:Q8BSU2"/>
<dbReference type="Proteomes" id="UP000000589">
    <property type="component" value="Chromosome 11"/>
</dbReference>
<dbReference type="RNAct" id="Q8BSU2">
    <property type="molecule type" value="protein"/>
</dbReference>
<dbReference type="Bgee" id="ENSMUSG00000018920">
    <property type="expression patterns" value="Expressed in right kidney and 145 other cell types or tissues"/>
</dbReference>
<dbReference type="ExpressionAtlas" id="Q8BSU2">
    <property type="expression patterns" value="baseline and differential"/>
</dbReference>
<dbReference type="GO" id="GO:0005615">
    <property type="term" value="C:extracellular space"/>
    <property type="evidence" value="ECO:0000314"/>
    <property type="project" value="UniProtKB"/>
</dbReference>
<dbReference type="GO" id="GO:0016020">
    <property type="term" value="C:membrane"/>
    <property type="evidence" value="ECO:0000314"/>
    <property type="project" value="UniProtKB"/>
</dbReference>
<dbReference type="GO" id="GO:0008009">
    <property type="term" value="F:chemokine activity"/>
    <property type="evidence" value="ECO:0000314"/>
    <property type="project" value="MGI"/>
</dbReference>
<dbReference type="GO" id="GO:0042379">
    <property type="term" value="F:chemokine receptor binding"/>
    <property type="evidence" value="ECO:0000353"/>
    <property type="project" value="UniProtKB"/>
</dbReference>
<dbReference type="GO" id="GO:0005041">
    <property type="term" value="F:low-density lipoprotein particle receptor activity"/>
    <property type="evidence" value="ECO:0000314"/>
    <property type="project" value="MGI"/>
</dbReference>
<dbReference type="GO" id="GO:0005044">
    <property type="term" value="F:scavenger receptor activity"/>
    <property type="evidence" value="ECO:0000314"/>
    <property type="project" value="MGI"/>
</dbReference>
<dbReference type="GO" id="GO:0071222">
    <property type="term" value="P:cellular response to lipopolysaccharide"/>
    <property type="evidence" value="ECO:0000314"/>
    <property type="project" value="UniProtKB"/>
</dbReference>
<dbReference type="GO" id="GO:0030307">
    <property type="term" value="P:positive regulation of cell growth"/>
    <property type="evidence" value="ECO:0007669"/>
    <property type="project" value="InterPro"/>
</dbReference>
<dbReference type="GO" id="GO:0030335">
    <property type="term" value="P:positive regulation of cell migration"/>
    <property type="evidence" value="ECO:0007669"/>
    <property type="project" value="InterPro"/>
</dbReference>
<dbReference type="GO" id="GO:0006898">
    <property type="term" value="P:receptor-mediated endocytosis"/>
    <property type="evidence" value="ECO:0007669"/>
    <property type="project" value="InterPro"/>
</dbReference>
<dbReference type="GO" id="GO:0034612">
    <property type="term" value="P:response to tumor necrosis factor"/>
    <property type="evidence" value="ECO:0007669"/>
    <property type="project" value="InterPro"/>
</dbReference>
<dbReference type="GO" id="GO:0034341">
    <property type="term" value="P:response to type II interferon"/>
    <property type="evidence" value="ECO:0007669"/>
    <property type="project" value="InterPro"/>
</dbReference>
<dbReference type="GO" id="GO:0010818">
    <property type="term" value="P:T cell chemotaxis"/>
    <property type="evidence" value="ECO:0000314"/>
    <property type="project" value="UniProtKB"/>
</dbReference>
<dbReference type="InterPro" id="IPR026296">
    <property type="entry name" value="CXCL16"/>
</dbReference>
<dbReference type="InterPro" id="IPR048585">
    <property type="entry name" value="CXCL16_dom"/>
</dbReference>
<dbReference type="PANTHER" id="PTHR14385:SF0">
    <property type="entry name" value="C-X-C MOTIF CHEMOKINE 16"/>
    <property type="match status" value="1"/>
</dbReference>
<dbReference type="PANTHER" id="PTHR14385">
    <property type="entry name" value="CXC CHEMOKINE LIGAND"/>
    <property type="match status" value="1"/>
</dbReference>
<dbReference type="Pfam" id="PF20902">
    <property type="entry name" value="CXCL16"/>
    <property type="match status" value="1"/>
</dbReference>
<comment type="function">
    <text evidence="5">Induces a strong chemotactic response. Induces calcium mobilization. Binds to CXCR6/Bonzo. Also acts as a scavenger receptor on macrophages, which specifically binds to OxLDL (oxidized low density lipoprotein), suggesting that it may be involved in pathophysiology such as atherogenesis.</text>
</comment>
<comment type="subcellular location">
    <subcellularLocation>
        <location evidence="7">Membrane</location>
        <topology evidence="7">Single-pass type I membrane protein</topology>
    </subcellularLocation>
</comment>
<comment type="tissue specificity">
    <text evidence="4 6">Widely expressed. Not detected in purified B- and T-cells.</text>
</comment>
<comment type="PTM">
    <text evidence="1">Glycosylated.</text>
</comment>
<comment type="similarity">
    <text evidence="7">Belongs to the intercrine alpha (chemokine CxC) family.</text>
</comment>
<sequence>MRRGFGPLSLAFFLFLLALLTLPGDGNQGSVAGSCSCDRTISSGTQIPQGTLDHIRKYLKAFHRCPFFIRFQLQSKSVCGGSQDQWVRELVDCFERKECGTGHGKSFHHQKHLPQASTQTPEAAEGTPSDTSTPAHSQSTQHSTLPSGALSLNKEHTQPWEMTTLPSGYGLEARPEAEANEKQQDDRQQEAPGAGASTPAWVPVLSLLAIVFFLTAAMAYVLCNRRATQQNSAGLQLWYTPVEPRP</sequence>
<reference key="1">
    <citation type="journal article" date="2000" name="Nat. Immunol.">
        <title>A transmembrane CXC chemokine is a ligand for HIV-coreceptor Bonzo.</title>
        <authorList>
            <person name="Matloubian M."/>
            <person name="David A."/>
            <person name="Engel S."/>
            <person name="Ryan J.E."/>
            <person name="Cyster J.G."/>
        </authorList>
    </citation>
    <scope>NUCLEOTIDE SEQUENCE [MRNA]</scope>
    <scope>PROTEIN SEQUENCE OF N-TERMINUS</scope>
    <scope>TISSUE SPECIFICITY</scope>
    <source>
        <strain>C57BL/6J</strain>
    </source>
</reference>
<reference key="2">
    <citation type="journal article" date="2000" name="J. Biol. Chem.">
        <title>Molecular cloning of a novel scavenger receptor for oxidized low density lipoprotein, SR-PSOX, on macrophages.</title>
        <authorList>
            <person name="Shimaoka T."/>
            <person name="Kume N."/>
            <person name="Minami M."/>
            <person name="Hayashida K."/>
            <person name="Kataoka H."/>
            <person name="Kita T."/>
            <person name="Yonehara S."/>
        </authorList>
    </citation>
    <scope>NUCLEOTIDE SEQUENCE [MRNA]</scope>
    <scope>FUNCTION</scope>
</reference>
<reference key="3">
    <citation type="journal article" date="2005" name="Science">
        <title>The transcriptional landscape of the mammalian genome.</title>
        <authorList>
            <person name="Carninci P."/>
            <person name="Kasukawa T."/>
            <person name="Katayama S."/>
            <person name="Gough J."/>
            <person name="Frith M.C."/>
            <person name="Maeda N."/>
            <person name="Oyama R."/>
            <person name="Ravasi T."/>
            <person name="Lenhard B."/>
            <person name="Wells C."/>
            <person name="Kodzius R."/>
            <person name="Shimokawa K."/>
            <person name="Bajic V.B."/>
            <person name="Brenner S.E."/>
            <person name="Batalov S."/>
            <person name="Forrest A.R."/>
            <person name="Zavolan M."/>
            <person name="Davis M.J."/>
            <person name="Wilming L.G."/>
            <person name="Aidinis V."/>
            <person name="Allen J.E."/>
            <person name="Ambesi-Impiombato A."/>
            <person name="Apweiler R."/>
            <person name="Aturaliya R.N."/>
            <person name="Bailey T.L."/>
            <person name="Bansal M."/>
            <person name="Baxter L."/>
            <person name="Beisel K.W."/>
            <person name="Bersano T."/>
            <person name="Bono H."/>
            <person name="Chalk A.M."/>
            <person name="Chiu K.P."/>
            <person name="Choudhary V."/>
            <person name="Christoffels A."/>
            <person name="Clutterbuck D.R."/>
            <person name="Crowe M.L."/>
            <person name="Dalla E."/>
            <person name="Dalrymple B.P."/>
            <person name="de Bono B."/>
            <person name="Della Gatta G."/>
            <person name="di Bernardo D."/>
            <person name="Down T."/>
            <person name="Engstrom P."/>
            <person name="Fagiolini M."/>
            <person name="Faulkner G."/>
            <person name="Fletcher C.F."/>
            <person name="Fukushima T."/>
            <person name="Furuno M."/>
            <person name="Futaki S."/>
            <person name="Gariboldi M."/>
            <person name="Georgii-Hemming P."/>
            <person name="Gingeras T.R."/>
            <person name="Gojobori T."/>
            <person name="Green R.E."/>
            <person name="Gustincich S."/>
            <person name="Harbers M."/>
            <person name="Hayashi Y."/>
            <person name="Hensch T.K."/>
            <person name="Hirokawa N."/>
            <person name="Hill D."/>
            <person name="Huminiecki L."/>
            <person name="Iacono M."/>
            <person name="Ikeo K."/>
            <person name="Iwama A."/>
            <person name="Ishikawa T."/>
            <person name="Jakt M."/>
            <person name="Kanapin A."/>
            <person name="Katoh M."/>
            <person name="Kawasawa Y."/>
            <person name="Kelso J."/>
            <person name="Kitamura H."/>
            <person name="Kitano H."/>
            <person name="Kollias G."/>
            <person name="Krishnan S.P."/>
            <person name="Kruger A."/>
            <person name="Kummerfeld S.K."/>
            <person name="Kurochkin I.V."/>
            <person name="Lareau L.F."/>
            <person name="Lazarevic D."/>
            <person name="Lipovich L."/>
            <person name="Liu J."/>
            <person name="Liuni S."/>
            <person name="McWilliam S."/>
            <person name="Madan Babu M."/>
            <person name="Madera M."/>
            <person name="Marchionni L."/>
            <person name="Matsuda H."/>
            <person name="Matsuzawa S."/>
            <person name="Miki H."/>
            <person name="Mignone F."/>
            <person name="Miyake S."/>
            <person name="Morris K."/>
            <person name="Mottagui-Tabar S."/>
            <person name="Mulder N."/>
            <person name="Nakano N."/>
            <person name="Nakauchi H."/>
            <person name="Ng P."/>
            <person name="Nilsson R."/>
            <person name="Nishiguchi S."/>
            <person name="Nishikawa S."/>
            <person name="Nori F."/>
            <person name="Ohara O."/>
            <person name="Okazaki Y."/>
            <person name="Orlando V."/>
            <person name="Pang K.C."/>
            <person name="Pavan W.J."/>
            <person name="Pavesi G."/>
            <person name="Pesole G."/>
            <person name="Petrovsky N."/>
            <person name="Piazza S."/>
            <person name="Reed J."/>
            <person name="Reid J.F."/>
            <person name="Ring B.Z."/>
            <person name="Ringwald M."/>
            <person name="Rost B."/>
            <person name="Ruan Y."/>
            <person name="Salzberg S.L."/>
            <person name="Sandelin A."/>
            <person name="Schneider C."/>
            <person name="Schoenbach C."/>
            <person name="Sekiguchi K."/>
            <person name="Semple C.A."/>
            <person name="Seno S."/>
            <person name="Sessa L."/>
            <person name="Sheng Y."/>
            <person name="Shibata Y."/>
            <person name="Shimada H."/>
            <person name="Shimada K."/>
            <person name="Silva D."/>
            <person name="Sinclair B."/>
            <person name="Sperling S."/>
            <person name="Stupka E."/>
            <person name="Sugiura K."/>
            <person name="Sultana R."/>
            <person name="Takenaka Y."/>
            <person name="Taki K."/>
            <person name="Tammoja K."/>
            <person name="Tan S.L."/>
            <person name="Tang S."/>
            <person name="Taylor M.S."/>
            <person name="Tegner J."/>
            <person name="Teichmann S.A."/>
            <person name="Ueda H.R."/>
            <person name="van Nimwegen E."/>
            <person name="Verardo R."/>
            <person name="Wei C.L."/>
            <person name="Yagi K."/>
            <person name="Yamanishi H."/>
            <person name="Zabarovsky E."/>
            <person name="Zhu S."/>
            <person name="Zimmer A."/>
            <person name="Hide W."/>
            <person name="Bult C."/>
            <person name="Grimmond S.M."/>
            <person name="Teasdale R.D."/>
            <person name="Liu E.T."/>
            <person name="Brusic V."/>
            <person name="Quackenbush J."/>
            <person name="Wahlestedt C."/>
            <person name="Mattick J.S."/>
            <person name="Hume D.A."/>
            <person name="Kai C."/>
            <person name="Sasaki D."/>
            <person name="Tomaru Y."/>
            <person name="Fukuda S."/>
            <person name="Kanamori-Katayama M."/>
            <person name="Suzuki M."/>
            <person name="Aoki J."/>
            <person name="Arakawa T."/>
            <person name="Iida J."/>
            <person name="Imamura K."/>
            <person name="Itoh M."/>
            <person name="Kato T."/>
            <person name="Kawaji H."/>
            <person name="Kawagashira N."/>
            <person name="Kawashima T."/>
            <person name="Kojima M."/>
            <person name="Kondo S."/>
            <person name="Konno H."/>
            <person name="Nakano K."/>
            <person name="Ninomiya N."/>
            <person name="Nishio T."/>
            <person name="Okada M."/>
            <person name="Plessy C."/>
            <person name="Shibata K."/>
            <person name="Shiraki T."/>
            <person name="Suzuki S."/>
            <person name="Tagami M."/>
            <person name="Waki K."/>
            <person name="Watahiki A."/>
            <person name="Okamura-Oho Y."/>
            <person name="Suzuki H."/>
            <person name="Kawai J."/>
            <person name="Hayashizaki Y."/>
        </authorList>
    </citation>
    <scope>NUCLEOTIDE SEQUENCE [LARGE SCALE MRNA]</scope>
    <source>
        <strain>C57BL/6J</strain>
        <tissue>Bone marrow</tissue>
        <tissue>Pituitary</tissue>
        <tissue>Skin</tissue>
        <tissue>Tongue</tissue>
    </source>
</reference>
<reference key="4">
    <citation type="journal article" date="2009" name="PLoS Biol.">
        <title>Lineage-specific biology revealed by a finished genome assembly of the mouse.</title>
        <authorList>
            <person name="Church D.M."/>
            <person name="Goodstadt L."/>
            <person name="Hillier L.W."/>
            <person name="Zody M.C."/>
            <person name="Goldstein S."/>
            <person name="She X."/>
            <person name="Bult C.J."/>
            <person name="Agarwala R."/>
            <person name="Cherry J.L."/>
            <person name="DiCuccio M."/>
            <person name="Hlavina W."/>
            <person name="Kapustin Y."/>
            <person name="Meric P."/>
            <person name="Maglott D."/>
            <person name="Birtle Z."/>
            <person name="Marques A.C."/>
            <person name="Graves T."/>
            <person name="Zhou S."/>
            <person name="Teague B."/>
            <person name="Potamousis K."/>
            <person name="Churas C."/>
            <person name="Place M."/>
            <person name="Herschleb J."/>
            <person name="Runnheim R."/>
            <person name="Forrest D."/>
            <person name="Amos-Landgraf J."/>
            <person name="Schwartz D.C."/>
            <person name="Cheng Z."/>
            <person name="Lindblad-Toh K."/>
            <person name="Eichler E.E."/>
            <person name="Ponting C.P."/>
        </authorList>
    </citation>
    <scope>NUCLEOTIDE SEQUENCE [LARGE SCALE GENOMIC DNA]</scope>
    <source>
        <strain>C57BL/6J</strain>
    </source>
</reference>
<reference key="5">
    <citation type="submission" date="2005-07" db="EMBL/GenBank/DDBJ databases">
        <authorList>
            <person name="Mural R.J."/>
            <person name="Adams M.D."/>
            <person name="Myers E.W."/>
            <person name="Smith H.O."/>
            <person name="Venter J.C."/>
        </authorList>
    </citation>
    <scope>NUCLEOTIDE SEQUENCE [LARGE SCALE GENOMIC DNA]</scope>
</reference>
<reference key="6">
    <citation type="journal article" date="2004" name="Genome Res.">
        <title>The status, quality, and expansion of the NIH full-length cDNA project: the Mammalian Gene Collection (MGC).</title>
        <authorList>
            <consortium name="The MGC Project Team"/>
        </authorList>
    </citation>
    <scope>NUCLEOTIDE SEQUENCE [LARGE SCALE MRNA]</scope>
    <source>
        <tissue>Mammary tumor</tissue>
    </source>
</reference>
<reference key="7">
    <citation type="journal article" date="2010" name="J. Biol. Chem.">
        <title>Zmynd15 encodes a histone deacetylase-dependent transcriptional repressor essential for spermiogenesis and male fertility.</title>
        <authorList>
            <person name="Yan W."/>
            <person name="Si Y."/>
            <person name="Slaymaker S."/>
            <person name="Li J."/>
            <person name="Zheng H."/>
            <person name="Young D.L."/>
            <person name="Aslanian A."/>
            <person name="Saunders L."/>
            <person name="Verdin E."/>
            <person name="Charo I.F."/>
        </authorList>
    </citation>
    <scope>TISSUE SPECIFICITY</scope>
</reference>
<organism>
    <name type="scientific">Mus musculus</name>
    <name type="common">Mouse</name>
    <dbReference type="NCBI Taxonomy" id="10090"/>
    <lineage>
        <taxon>Eukaryota</taxon>
        <taxon>Metazoa</taxon>
        <taxon>Chordata</taxon>
        <taxon>Craniata</taxon>
        <taxon>Vertebrata</taxon>
        <taxon>Euteleostomi</taxon>
        <taxon>Mammalia</taxon>
        <taxon>Eutheria</taxon>
        <taxon>Euarchontoglires</taxon>
        <taxon>Glires</taxon>
        <taxon>Rodentia</taxon>
        <taxon>Myomorpha</taxon>
        <taxon>Muroidea</taxon>
        <taxon>Muridae</taxon>
        <taxon>Murinae</taxon>
        <taxon>Mus</taxon>
        <taxon>Mus</taxon>
    </lineage>
</organism>
<gene>
    <name type="primary">Cxcl16</name>
    <name type="synonym">Srpsox</name>
</gene>
<proteinExistence type="evidence at protein level"/>
<feature type="signal peptide" evidence="4">
    <location>
        <begin position="1"/>
        <end position="26"/>
    </location>
</feature>
<feature type="chain" id="PRO_0000005119" description="C-X-C motif chemokine 16">
    <location>
        <begin position="27"/>
        <end position="246"/>
    </location>
</feature>
<feature type="topological domain" description="Extracellular" evidence="2">
    <location>
        <begin position="27"/>
        <end position="201"/>
    </location>
</feature>
<feature type="transmembrane region" description="Helical" evidence="2">
    <location>
        <begin position="202"/>
        <end position="222"/>
    </location>
</feature>
<feature type="topological domain" description="Cytoplasmic" evidence="2">
    <location>
        <begin position="223"/>
        <end position="246"/>
    </location>
</feature>
<feature type="region of interest" description="Disordered" evidence="3">
    <location>
        <begin position="104"/>
        <end position="150"/>
    </location>
</feature>
<feature type="region of interest" description="Disordered" evidence="3">
    <location>
        <begin position="175"/>
        <end position="198"/>
    </location>
</feature>
<feature type="compositionally biased region" description="Polar residues" evidence="3">
    <location>
        <begin position="128"/>
        <end position="146"/>
    </location>
</feature>
<feature type="compositionally biased region" description="Basic and acidic residues" evidence="3">
    <location>
        <begin position="175"/>
        <end position="189"/>
    </location>
</feature>
<feature type="disulfide bond" evidence="1">
    <location>
        <begin position="35"/>
        <end position="65"/>
    </location>
</feature>
<feature type="disulfide bond" evidence="1">
    <location>
        <begin position="37"/>
        <end position="79"/>
    </location>
</feature>
<feature type="sequence conflict" description="In Ref. 6; AAH19961." evidence="7" ref="6">
    <original>S</original>
    <variation>P</variation>
    <location>
        <position position="129"/>
    </location>
</feature>
<accession>Q8BSU2</accession>
<accession>Q3UD70</accession>
<accession>Q5F2D5</accession>
<accession>Q8VE25</accession>
<accession>Q9EPB3</accession>
<protein>
    <recommendedName>
        <fullName>C-X-C motif chemokine 16</fullName>
    </recommendedName>
    <alternativeName>
        <fullName>Scavenger receptor for phosphatidylserine and oxidized low density lipoprotein</fullName>
        <shortName>SR-PSOX</shortName>
    </alternativeName>
    <alternativeName>
        <fullName>Small-inducible cytokine B16</fullName>
    </alternativeName>
    <alternativeName>
        <fullName>Transmembrane chemokine CXCL16</fullName>
    </alternativeName>
</protein>